<evidence type="ECO:0000255" key="1">
    <source>
        <dbReference type="HAMAP-Rule" id="MF_00052"/>
    </source>
</evidence>
<evidence type="ECO:0000255" key="2">
    <source>
        <dbReference type="PROSITE-ProRule" id="PRU01319"/>
    </source>
</evidence>
<dbReference type="EC" id="3.1.26.4" evidence="1"/>
<dbReference type="EMBL" id="CU928160">
    <property type="protein sequence ID" value="CAQ97070.1"/>
    <property type="molecule type" value="Genomic_DNA"/>
</dbReference>
<dbReference type="RefSeq" id="WP_000569430.1">
    <property type="nucleotide sequence ID" value="NC_011741.1"/>
</dbReference>
<dbReference type="SMR" id="B7M1Y6"/>
<dbReference type="GeneID" id="93777242"/>
<dbReference type="KEGG" id="ecr:ECIAI1_0183"/>
<dbReference type="HOGENOM" id="CLU_036532_3_2_6"/>
<dbReference type="GO" id="GO:0005737">
    <property type="term" value="C:cytoplasm"/>
    <property type="evidence" value="ECO:0007669"/>
    <property type="project" value="UniProtKB-SubCell"/>
</dbReference>
<dbReference type="GO" id="GO:0032299">
    <property type="term" value="C:ribonuclease H2 complex"/>
    <property type="evidence" value="ECO:0007669"/>
    <property type="project" value="TreeGrafter"/>
</dbReference>
<dbReference type="GO" id="GO:0030145">
    <property type="term" value="F:manganese ion binding"/>
    <property type="evidence" value="ECO:0007669"/>
    <property type="project" value="UniProtKB-UniRule"/>
</dbReference>
<dbReference type="GO" id="GO:0003723">
    <property type="term" value="F:RNA binding"/>
    <property type="evidence" value="ECO:0007669"/>
    <property type="project" value="InterPro"/>
</dbReference>
<dbReference type="GO" id="GO:0004523">
    <property type="term" value="F:RNA-DNA hybrid ribonuclease activity"/>
    <property type="evidence" value="ECO:0007669"/>
    <property type="project" value="UniProtKB-UniRule"/>
</dbReference>
<dbReference type="GO" id="GO:0043137">
    <property type="term" value="P:DNA replication, removal of RNA primer"/>
    <property type="evidence" value="ECO:0007669"/>
    <property type="project" value="TreeGrafter"/>
</dbReference>
<dbReference type="GO" id="GO:0006298">
    <property type="term" value="P:mismatch repair"/>
    <property type="evidence" value="ECO:0007669"/>
    <property type="project" value="TreeGrafter"/>
</dbReference>
<dbReference type="CDD" id="cd07182">
    <property type="entry name" value="RNase_HII_bacteria_HII_like"/>
    <property type="match status" value="1"/>
</dbReference>
<dbReference type="FunFam" id="3.30.420.10:FF:000006">
    <property type="entry name" value="Ribonuclease HII"/>
    <property type="match status" value="1"/>
</dbReference>
<dbReference type="Gene3D" id="3.30.420.10">
    <property type="entry name" value="Ribonuclease H-like superfamily/Ribonuclease H"/>
    <property type="match status" value="1"/>
</dbReference>
<dbReference type="HAMAP" id="MF_00052_B">
    <property type="entry name" value="RNase_HII_B"/>
    <property type="match status" value="1"/>
</dbReference>
<dbReference type="InterPro" id="IPR022898">
    <property type="entry name" value="RNase_HII"/>
</dbReference>
<dbReference type="InterPro" id="IPR001352">
    <property type="entry name" value="RNase_HII/HIII"/>
</dbReference>
<dbReference type="InterPro" id="IPR024567">
    <property type="entry name" value="RNase_HII/HIII_dom"/>
</dbReference>
<dbReference type="InterPro" id="IPR012337">
    <property type="entry name" value="RNaseH-like_sf"/>
</dbReference>
<dbReference type="InterPro" id="IPR036397">
    <property type="entry name" value="RNaseH_sf"/>
</dbReference>
<dbReference type="NCBIfam" id="NF000594">
    <property type="entry name" value="PRK00015.1-1"/>
    <property type="match status" value="1"/>
</dbReference>
<dbReference type="NCBIfam" id="NF000595">
    <property type="entry name" value="PRK00015.1-3"/>
    <property type="match status" value="1"/>
</dbReference>
<dbReference type="NCBIfam" id="NF000596">
    <property type="entry name" value="PRK00015.1-4"/>
    <property type="match status" value="1"/>
</dbReference>
<dbReference type="PANTHER" id="PTHR10954">
    <property type="entry name" value="RIBONUCLEASE H2 SUBUNIT A"/>
    <property type="match status" value="1"/>
</dbReference>
<dbReference type="PANTHER" id="PTHR10954:SF18">
    <property type="entry name" value="RIBONUCLEASE HII"/>
    <property type="match status" value="1"/>
</dbReference>
<dbReference type="Pfam" id="PF01351">
    <property type="entry name" value="RNase_HII"/>
    <property type="match status" value="1"/>
</dbReference>
<dbReference type="SUPFAM" id="SSF53098">
    <property type="entry name" value="Ribonuclease H-like"/>
    <property type="match status" value="1"/>
</dbReference>
<dbReference type="PROSITE" id="PS51975">
    <property type="entry name" value="RNASE_H_2"/>
    <property type="match status" value="1"/>
</dbReference>
<keyword id="KW-0963">Cytoplasm</keyword>
<keyword id="KW-0255">Endonuclease</keyword>
<keyword id="KW-0378">Hydrolase</keyword>
<keyword id="KW-0464">Manganese</keyword>
<keyword id="KW-0479">Metal-binding</keyword>
<keyword id="KW-0540">Nuclease</keyword>
<sequence length="198" mass="21526">MIEFVYPHTQLVAGVDEVGRGPLVGAVVTAAVILDPARPIAGLNDSKKLSEKRRLALYEEIKEKALSWSLGRAEPHEIDELNILHATMLAMQRAVAGLHIAPEYVLIDGNRCPKLPMPAMAVVKGDSRVPEISAASILAKVTRDAEMAALDIVFPQYGFAQHKGYPTAFHLEKLAEHGATEHHRRSFGPVKRALGLAS</sequence>
<feature type="chain" id="PRO_1000116845" description="Ribonuclease HII">
    <location>
        <begin position="1"/>
        <end position="198"/>
    </location>
</feature>
<feature type="domain" description="RNase H type-2" evidence="2">
    <location>
        <begin position="10"/>
        <end position="198"/>
    </location>
</feature>
<feature type="binding site" evidence="1">
    <location>
        <position position="16"/>
    </location>
    <ligand>
        <name>a divalent metal cation</name>
        <dbReference type="ChEBI" id="CHEBI:60240"/>
    </ligand>
</feature>
<feature type="binding site" evidence="1">
    <location>
        <position position="17"/>
    </location>
    <ligand>
        <name>a divalent metal cation</name>
        <dbReference type="ChEBI" id="CHEBI:60240"/>
    </ligand>
</feature>
<feature type="binding site" evidence="1">
    <location>
        <position position="108"/>
    </location>
    <ligand>
        <name>a divalent metal cation</name>
        <dbReference type="ChEBI" id="CHEBI:60240"/>
    </ligand>
</feature>
<proteinExistence type="inferred from homology"/>
<comment type="function">
    <text evidence="1">Endonuclease that specifically degrades the RNA of RNA-DNA hybrids.</text>
</comment>
<comment type="catalytic activity">
    <reaction evidence="1">
        <text>Endonucleolytic cleavage to 5'-phosphomonoester.</text>
        <dbReference type="EC" id="3.1.26.4"/>
    </reaction>
</comment>
<comment type="cofactor">
    <cofactor evidence="1">
        <name>Mn(2+)</name>
        <dbReference type="ChEBI" id="CHEBI:29035"/>
    </cofactor>
    <cofactor evidence="1">
        <name>Mg(2+)</name>
        <dbReference type="ChEBI" id="CHEBI:18420"/>
    </cofactor>
    <text evidence="1">Manganese or magnesium. Binds 1 divalent metal ion per monomer in the absence of substrate. May bind a second metal ion after substrate binding.</text>
</comment>
<comment type="subcellular location">
    <subcellularLocation>
        <location evidence="1">Cytoplasm</location>
    </subcellularLocation>
</comment>
<comment type="similarity">
    <text evidence="1">Belongs to the RNase HII family.</text>
</comment>
<name>RNH2_ECO8A</name>
<gene>
    <name evidence="1" type="primary">rnhB</name>
    <name type="ordered locus">ECIAI1_0183</name>
</gene>
<accession>B7M1Y6</accession>
<reference key="1">
    <citation type="journal article" date="2009" name="PLoS Genet.">
        <title>Organised genome dynamics in the Escherichia coli species results in highly diverse adaptive paths.</title>
        <authorList>
            <person name="Touchon M."/>
            <person name="Hoede C."/>
            <person name="Tenaillon O."/>
            <person name="Barbe V."/>
            <person name="Baeriswyl S."/>
            <person name="Bidet P."/>
            <person name="Bingen E."/>
            <person name="Bonacorsi S."/>
            <person name="Bouchier C."/>
            <person name="Bouvet O."/>
            <person name="Calteau A."/>
            <person name="Chiapello H."/>
            <person name="Clermont O."/>
            <person name="Cruveiller S."/>
            <person name="Danchin A."/>
            <person name="Diard M."/>
            <person name="Dossat C."/>
            <person name="Karoui M.E."/>
            <person name="Frapy E."/>
            <person name="Garry L."/>
            <person name="Ghigo J.M."/>
            <person name="Gilles A.M."/>
            <person name="Johnson J."/>
            <person name="Le Bouguenec C."/>
            <person name="Lescat M."/>
            <person name="Mangenot S."/>
            <person name="Martinez-Jehanne V."/>
            <person name="Matic I."/>
            <person name="Nassif X."/>
            <person name="Oztas S."/>
            <person name="Petit M.A."/>
            <person name="Pichon C."/>
            <person name="Rouy Z."/>
            <person name="Ruf C.S."/>
            <person name="Schneider D."/>
            <person name="Tourret J."/>
            <person name="Vacherie B."/>
            <person name="Vallenet D."/>
            <person name="Medigue C."/>
            <person name="Rocha E.P.C."/>
            <person name="Denamur E."/>
        </authorList>
    </citation>
    <scope>NUCLEOTIDE SEQUENCE [LARGE SCALE GENOMIC DNA]</scope>
    <source>
        <strain>IAI1</strain>
    </source>
</reference>
<organism>
    <name type="scientific">Escherichia coli O8 (strain IAI1)</name>
    <dbReference type="NCBI Taxonomy" id="585034"/>
    <lineage>
        <taxon>Bacteria</taxon>
        <taxon>Pseudomonadati</taxon>
        <taxon>Pseudomonadota</taxon>
        <taxon>Gammaproteobacteria</taxon>
        <taxon>Enterobacterales</taxon>
        <taxon>Enterobacteriaceae</taxon>
        <taxon>Escherichia</taxon>
    </lineage>
</organism>
<protein>
    <recommendedName>
        <fullName evidence="1">Ribonuclease HII</fullName>
        <shortName evidence="1">RNase HII</shortName>
        <ecNumber evidence="1">3.1.26.4</ecNumber>
    </recommendedName>
</protein>